<accession>Q7KWT9</accession>
<accession>Q559H9</accession>
<sequence>MKLLLILILIINNYNLCLSYECNSNRTYGLKGSSCEINADCLFPEVCFNSVCSKIRTTGESCTKKTDCTLTYDFGDCVNGKCEIIIATGDRCNPKVTSQKCSSSSECKNGICQLISACNSYNCPLNQYCDDKTKQCKPIPNDINSIVCKANSQCPTSHICTSSNKCIIKYSSKVGEKCTDSPLQCRVFNGEICNQETQKCIKNDQYFKQCEDESTCNGGLCVCLDDVNSKSVCVGPNGELNNEKCVNLEQKLEQCLINEKCNTLSPITCKCFKQFECFQYECNSVERFYNYKSNYYQSLNCSRFLTKP</sequence>
<comment type="subcellular location">
    <subcellularLocation>
        <location evidence="3">Secreted</location>
    </subcellularLocation>
</comment>
<comment type="developmental stage">
    <text evidence="2">Expressed in pstAO cells.</text>
</comment>
<gene>
    <name type="ORF">DDB_G0272512</name>
</gene>
<proteinExistence type="evidence at transcript level"/>
<feature type="signal peptide" evidence="1">
    <location>
        <begin position="1"/>
        <end position="19"/>
    </location>
</feature>
<feature type="chain" id="PRO_0000392667" description="Uncharacterized protein DDB_G0272512">
    <location>
        <begin position="20"/>
        <end position="308"/>
    </location>
</feature>
<feature type="glycosylation site" description="N-linked (GlcNAc...) asparagine" evidence="1">
    <location>
        <position position="25"/>
    </location>
</feature>
<feature type="glycosylation site" description="N-linked (GlcNAc...) asparagine" evidence="1">
    <location>
        <position position="300"/>
    </location>
</feature>
<keyword id="KW-0325">Glycoprotein</keyword>
<keyword id="KW-1185">Reference proteome</keyword>
<keyword id="KW-0964">Secreted</keyword>
<keyword id="KW-0732">Signal</keyword>
<dbReference type="EMBL" id="AAFI02000008">
    <property type="protein sequence ID" value="EAL71180.1"/>
    <property type="molecule type" value="Genomic_DNA"/>
</dbReference>
<dbReference type="RefSeq" id="XP_645127.1">
    <property type="nucleotide sequence ID" value="XM_640035.1"/>
</dbReference>
<dbReference type="GlyGen" id="Q7KWT9">
    <property type="glycosylation" value="2 sites"/>
</dbReference>
<dbReference type="PaxDb" id="44689-DDB0230090"/>
<dbReference type="EnsemblProtists" id="EAL71180">
    <property type="protein sequence ID" value="EAL71180"/>
    <property type="gene ID" value="DDB_G0272512"/>
</dbReference>
<dbReference type="GeneID" id="8618521"/>
<dbReference type="KEGG" id="ddi:DDB_G0272512"/>
<dbReference type="dictyBase" id="DDB_G0272512"/>
<dbReference type="VEuPathDB" id="AmoebaDB:DDB_G0272512"/>
<dbReference type="eggNOG" id="ENOG502R6PV">
    <property type="taxonomic scope" value="Eukaryota"/>
</dbReference>
<dbReference type="HOGENOM" id="CLU_904395_0_0_1"/>
<dbReference type="InParanoid" id="Q7KWT9"/>
<dbReference type="OMA" id="QCEDEST"/>
<dbReference type="PhylomeDB" id="Q7KWT9"/>
<dbReference type="PRO" id="PR:Q7KWT9"/>
<dbReference type="Proteomes" id="UP000002195">
    <property type="component" value="Chromosome 2"/>
</dbReference>
<dbReference type="GO" id="GO:0005576">
    <property type="term" value="C:extracellular region"/>
    <property type="evidence" value="ECO:0007669"/>
    <property type="project" value="UniProtKB-SubCell"/>
</dbReference>
<dbReference type="InterPro" id="IPR052326">
    <property type="entry name" value="Diff-Dev_Assoc_Protein"/>
</dbReference>
<dbReference type="PANTHER" id="PTHR33459">
    <property type="entry name" value="DD-GDCA PROTEIN"/>
    <property type="match status" value="1"/>
</dbReference>
<dbReference type="PANTHER" id="PTHR33459:SF19">
    <property type="entry name" value="DICKKOPF N-TERMINAL CYSTEINE-RICH DOMAIN-CONTAINING PROTEIN"/>
    <property type="match status" value="1"/>
</dbReference>
<dbReference type="PROSITE" id="PS00615">
    <property type="entry name" value="C_TYPE_LECTIN_1"/>
    <property type="match status" value="1"/>
</dbReference>
<name>Y2512_DICDI</name>
<organism>
    <name type="scientific">Dictyostelium discoideum</name>
    <name type="common">Social amoeba</name>
    <dbReference type="NCBI Taxonomy" id="44689"/>
    <lineage>
        <taxon>Eukaryota</taxon>
        <taxon>Amoebozoa</taxon>
        <taxon>Evosea</taxon>
        <taxon>Eumycetozoa</taxon>
        <taxon>Dictyostelia</taxon>
        <taxon>Dictyosteliales</taxon>
        <taxon>Dictyosteliaceae</taxon>
        <taxon>Dictyostelium</taxon>
    </lineage>
</organism>
<protein>
    <recommendedName>
        <fullName>Uncharacterized protein DDB_G0272512</fullName>
    </recommendedName>
</protein>
<evidence type="ECO:0000255" key="1"/>
<evidence type="ECO:0000269" key="2">
    <source>
    </source>
</evidence>
<evidence type="ECO:0000305" key="3"/>
<reference key="1">
    <citation type="journal article" date="2002" name="Nature">
        <title>Sequence and analysis of chromosome 2 of Dictyostelium discoideum.</title>
        <authorList>
            <person name="Gloeckner G."/>
            <person name="Eichinger L."/>
            <person name="Szafranski K."/>
            <person name="Pachebat J.A."/>
            <person name="Bankier A.T."/>
            <person name="Dear P.H."/>
            <person name="Lehmann R."/>
            <person name="Baumgart C."/>
            <person name="Parra G."/>
            <person name="Abril J.F."/>
            <person name="Guigo R."/>
            <person name="Kumpf K."/>
            <person name="Tunggal B."/>
            <person name="Cox E.C."/>
            <person name="Quail M.A."/>
            <person name="Platzer M."/>
            <person name="Rosenthal A."/>
            <person name="Noegel A.A."/>
        </authorList>
    </citation>
    <scope>NUCLEOTIDE SEQUENCE [LARGE SCALE GENOMIC DNA]</scope>
    <source>
        <strain>AX4</strain>
    </source>
</reference>
<reference key="2">
    <citation type="journal article" date="2005" name="Nature">
        <title>The genome of the social amoeba Dictyostelium discoideum.</title>
        <authorList>
            <person name="Eichinger L."/>
            <person name="Pachebat J.A."/>
            <person name="Gloeckner G."/>
            <person name="Rajandream M.A."/>
            <person name="Sucgang R."/>
            <person name="Berriman M."/>
            <person name="Song J."/>
            <person name="Olsen R."/>
            <person name="Szafranski K."/>
            <person name="Xu Q."/>
            <person name="Tunggal B."/>
            <person name="Kummerfeld S."/>
            <person name="Madera M."/>
            <person name="Konfortov B.A."/>
            <person name="Rivero F."/>
            <person name="Bankier A.T."/>
            <person name="Lehmann R."/>
            <person name="Hamlin N."/>
            <person name="Davies R."/>
            <person name="Gaudet P."/>
            <person name="Fey P."/>
            <person name="Pilcher K."/>
            <person name="Chen G."/>
            <person name="Saunders D."/>
            <person name="Sodergren E.J."/>
            <person name="Davis P."/>
            <person name="Kerhornou A."/>
            <person name="Nie X."/>
            <person name="Hall N."/>
            <person name="Anjard C."/>
            <person name="Hemphill L."/>
            <person name="Bason N."/>
            <person name="Farbrother P."/>
            <person name="Desany B."/>
            <person name="Just E."/>
            <person name="Morio T."/>
            <person name="Rost R."/>
            <person name="Churcher C.M."/>
            <person name="Cooper J."/>
            <person name="Haydock S."/>
            <person name="van Driessche N."/>
            <person name="Cronin A."/>
            <person name="Goodhead I."/>
            <person name="Muzny D.M."/>
            <person name="Mourier T."/>
            <person name="Pain A."/>
            <person name="Lu M."/>
            <person name="Harper D."/>
            <person name="Lindsay R."/>
            <person name="Hauser H."/>
            <person name="James K.D."/>
            <person name="Quiles M."/>
            <person name="Madan Babu M."/>
            <person name="Saito T."/>
            <person name="Buchrieser C."/>
            <person name="Wardroper A."/>
            <person name="Felder M."/>
            <person name="Thangavelu M."/>
            <person name="Johnson D."/>
            <person name="Knights A."/>
            <person name="Loulseged H."/>
            <person name="Mungall K.L."/>
            <person name="Oliver K."/>
            <person name="Price C."/>
            <person name="Quail M.A."/>
            <person name="Urushihara H."/>
            <person name="Hernandez J."/>
            <person name="Rabbinowitsch E."/>
            <person name="Steffen D."/>
            <person name="Sanders M."/>
            <person name="Ma J."/>
            <person name="Kohara Y."/>
            <person name="Sharp S."/>
            <person name="Simmonds M.N."/>
            <person name="Spiegler S."/>
            <person name="Tivey A."/>
            <person name="Sugano S."/>
            <person name="White B."/>
            <person name="Walker D."/>
            <person name="Woodward J.R."/>
            <person name="Winckler T."/>
            <person name="Tanaka Y."/>
            <person name="Shaulsky G."/>
            <person name="Schleicher M."/>
            <person name="Weinstock G.M."/>
            <person name="Rosenthal A."/>
            <person name="Cox E.C."/>
            <person name="Chisholm R.L."/>
            <person name="Gibbs R.A."/>
            <person name="Loomis W.F."/>
            <person name="Platzer M."/>
            <person name="Kay R.R."/>
            <person name="Williams J.G."/>
            <person name="Dear P.H."/>
            <person name="Noegel A.A."/>
            <person name="Barrell B.G."/>
            <person name="Kuspa A."/>
        </authorList>
    </citation>
    <scope>NUCLEOTIDE SEQUENCE [LARGE SCALE GENOMIC DNA]</scope>
    <source>
        <strain>AX4</strain>
    </source>
</reference>
<reference key="3">
    <citation type="journal article" date="2003" name="Eukaryot. Cell">
        <title>Changing patterns of gene expression in Dictyostelium prestalk cell subtypes recognized by in situ hybridization with genes from microarray analyses.</title>
        <authorList>
            <person name="Maeda M."/>
            <person name="Sakamoto H."/>
            <person name="Iranfar N."/>
            <person name="Fuller D."/>
            <person name="Maruo T."/>
            <person name="Ogihara S."/>
            <person name="Morio T."/>
            <person name="Urushihara H."/>
            <person name="Tanaka Y."/>
            <person name="Loomis W.F."/>
        </authorList>
    </citation>
    <scope>DEVELOPMENTAL STAGE [LARGE SCALE ANALYSIS]</scope>
</reference>